<gene>
    <name evidence="1" type="primary">mraY</name>
    <name type="ordered locus">H16_A3276</name>
</gene>
<keyword id="KW-0131">Cell cycle</keyword>
<keyword id="KW-0132">Cell division</keyword>
<keyword id="KW-0997">Cell inner membrane</keyword>
<keyword id="KW-1003">Cell membrane</keyword>
<keyword id="KW-0133">Cell shape</keyword>
<keyword id="KW-0961">Cell wall biogenesis/degradation</keyword>
<keyword id="KW-0460">Magnesium</keyword>
<keyword id="KW-0472">Membrane</keyword>
<keyword id="KW-0479">Metal-binding</keyword>
<keyword id="KW-0573">Peptidoglycan synthesis</keyword>
<keyword id="KW-1185">Reference proteome</keyword>
<keyword id="KW-0808">Transferase</keyword>
<keyword id="KW-0812">Transmembrane</keyword>
<keyword id="KW-1133">Transmembrane helix</keyword>
<feature type="chain" id="PRO_1000003035" description="Phospho-N-acetylmuramoyl-pentapeptide-transferase">
    <location>
        <begin position="1"/>
        <end position="389"/>
    </location>
</feature>
<feature type="transmembrane region" description="Helical" evidence="1">
    <location>
        <begin position="25"/>
        <end position="45"/>
    </location>
</feature>
<feature type="transmembrane region" description="Helical" evidence="1">
    <location>
        <begin position="74"/>
        <end position="94"/>
    </location>
</feature>
<feature type="transmembrane region" description="Helical" evidence="1">
    <location>
        <begin position="97"/>
        <end position="117"/>
    </location>
</feature>
<feature type="transmembrane region" description="Helical" evidence="1">
    <location>
        <begin position="134"/>
        <end position="154"/>
    </location>
</feature>
<feature type="transmembrane region" description="Helical" evidence="1">
    <location>
        <begin position="190"/>
        <end position="210"/>
    </location>
</feature>
<feature type="transmembrane region" description="Helical" evidence="1">
    <location>
        <begin position="222"/>
        <end position="242"/>
    </location>
</feature>
<feature type="transmembrane region" description="Helical" evidence="1">
    <location>
        <begin position="259"/>
        <end position="279"/>
    </location>
</feature>
<feature type="transmembrane region" description="Helical" evidence="1">
    <location>
        <begin position="286"/>
        <end position="306"/>
    </location>
</feature>
<feature type="transmembrane region" description="Helical" evidence="1">
    <location>
        <begin position="311"/>
        <end position="331"/>
    </location>
</feature>
<feature type="transmembrane region" description="Helical" evidence="1">
    <location>
        <begin position="366"/>
        <end position="386"/>
    </location>
</feature>
<accession>Q0K6M1</accession>
<name>MRAY_CUPNH</name>
<evidence type="ECO:0000255" key="1">
    <source>
        <dbReference type="HAMAP-Rule" id="MF_00038"/>
    </source>
</evidence>
<proteinExistence type="inferred from homology"/>
<comment type="function">
    <text evidence="1">Catalyzes the initial step of the lipid cycle reactions in the biosynthesis of the cell wall peptidoglycan: transfers peptidoglycan precursor phospho-MurNAc-pentapeptide from UDP-MurNAc-pentapeptide onto the lipid carrier undecaprenyl phosphate, yielding undecaprenyl-pyrophosphoryl-MurNAc-pentapeptide, known as lipid I.</text>
</comment>
<comment type="catalytic activity">
    <reaction evidence="1">
        <text>UDP-N-acetyl-alpha-D-muramoyl-L-alanyl-gamma-D-glutamyl-meso-2,6-diaminopimeloyl-D-alanyl-D-alanine + di-trans,octa-cis-undecaprenyl phosphate = di-trans,octa-cis-undecaprenyl diphospho-N-acetyl-alpha-D-muramoyl-L-alanyl-D-glutamyl-meso-2,6-diaminopimeloyl-D-alanyl-D-alanine + UMP</text>
        <dbReference type="Rhea" id="RHEA:28386"/>
        <dbReference type="ChEBI" id="CHEBI:57865"/>
        <dbReference type="ChEBI" id="CHEBI:60392"/>
        <dbReference type="ChEBI" id="CHEBI:61386"/>
        <dbReference type="ChEBI" id="CHEBI:61387"/>
        <dbReference type="EC" id="2.7.8.13"/>
    </reaction>
</comment>
<comment type="cofactor">
    <cofactor evidence="1">
        <name>Mg(2+)</name>
        <dbReference type="ChEBI" id="CHEBI:18420"/>
    </cofactor>
</comment>
<comment type="pathway">
    <text evidence="1">Cell wall biogenesis; peptidoglycan biosynthesis.</text>
</comment>
<comment type="subcellular location">
    <subcellularLocation>
        <location evidence="1">Cell inner membrane</location>
        <topology evidence="1">Multi-pass membrane protein</topology>
    </subcellularLocation>
</comment>
<comment type="similarity">
    <text evidence="1">Belongs to the glycosyltransferase 4 family. MraY subfamily.</text>
</comment>
<sequence length="389" mass="42969">MLLALAQWLQNDYSFLRVVNYLTFRAVMANLTALLIGLAFGPWVIRKLTELKVGQAVRTIGPQTHLVKAGTPTMGGVLVLVSIAVSTLLWCDWGNRFIWVVMLVTFGYGAIGWVDDYRKVVYRDPRGMSSREKFFWQTLIGLVAAVYLAFSVSESSNVRVWELFLNWVEGGLSLDMPYKSNLIVPFFKEISYPLGVAGFIVLTYLVIVGSSNAVNLTDGLDGLVIMPVVLVGGGLGVFAYVMGNSVYSKYLLFPHIPGAGELLIFCSALAGAGLAFLWFNAHPAQVFMGDVGALALGGALGTVAVIVRQEIVLFVMGGIFVVETLSVMAQVTWFKITKRRYGEGRRLFRMAPLHHHFELGGWKETQVTVRFWIITMLLVLIGLSTLKLR</sequence>
<reference key="1">
    <citation type="journal article" date="2006" name="Nat. Biotechnol.">
        <title>Genome sequence of the bioplastic-producing 'Knallgas' bacterium Ralstonia eutropha H16.</title>
        <authorList>
            <person name="Pohlmann A."/>
            <person name="Fricke W.F."/>
            <person name="Reinecke F."/>
            <person name="Kusian B."/>
            <person name="Liesegang H."/>
            <person name="Cramm R."/>
            <person name="Eitinger T."/>
            <person name="Ewering C."/>
            <person name="Poetter M."/>
            <person name="Schwartz E."/>
            <person name="Strittmatter A."/>
            <person name="Voss I."/>
            <person name="Gottschalk G."/>
            <person name="Steinbuechel A."/>
            <person name="Friedrich B."/>
            <person name="Bowien B."/>
        </authorList>
    </citation>
    <scope>NUCLEOTIDE SEQUENCE [LARGE SCALE GENOMIC DNA]</scope>
    <source>
        <strain>ATCC 17699 / DSM 428 / KCTC 22496 / NCIMB 10442 / H16 / Stanier 337</strain>
    </source>
</reference>
<organism>
    <name type="scientific">Cupriavidus necator (strain ATCC 17699 / DSM 428 / KCTC 22496 / NCIMB 10442 / H16 / Stanier 337)</name>
    <name type="common">Ralstonia eutropha</name>
    <dbReference type="NCBI Taxonomy" id="381666"/>
    <lineage>
        <taxon>Bacteria</taxon>
        <taxon>Pseudomonadati</taxon>
        <taxon>Pseudomonadota</taxon>
        <taxon>Betaproteobacteria</taxon>
        <taxon>Burkholderiales</taxon>
        <taxon>Burkholderiaceae</taxon>
        <taxon>Cupriavidus</taxon>
    </lineage>
</organism>
<dbReference type="EC" id="2.7.8.13" evidence="1"/>
<dbReference type="EMBL" id="AM260479">
    <property type="protein sequence ID" value="CAJ94350.1"/>
    <property type="molecule type" value="Genomic_DNA"/>
</dbReference>
<dbReference type="RefSeq" id="WP_010814772.1">
    <property type="nucleotide sequence ID" value="NZ_CP039287.1"/>
</dbReference>
<dbReference type="SMR" id="Q0K6M1"/>
<dbReference type="STRING" id="381666.H16_A3276"/>
<dbReference type="KEGG" id="reh:H16_A3276"/>
<dbReference type="eggNOG" id="COG0472">
    <property type="taxonomic scope" value="Bacteria"/>
</dbReference>
<dbReference type="HOGENOM" id="CLU_023982_0_0_4"/>
<dbReference type="OrthoDB" id="9805475at2"/>
<dbReference type="UniPathway" id="UPA00219"/>
<dbReference type="Proteomes" id="UP000008210">
    <property type="component" value="Chromosome 1"/>
</dbReference>
<dbReference type="GO" id="GO:0005886">
    <property type="term" value="C:plasma membrane"/>
    <property type="evidence" value="ECO:0007669"/>
    <property type="project" value="UniProtKB-SubCell"/>
</dbReference>
<dbReference type="GO" id="GO:0046872">
    <property type="term" value="F:metal ion binding"/>
    <property type="evidence" value="ECO:0007669"/>
    <property type="project" value="UniProtKB-KW"/>
</dbReference>
<dbReference type="GO" id="GO:0008963">
    <property type="term" value="F:phospho-N-acetylmuramoyl-pentapeptide-transferase activity"/>
    <property type="evidence" value="ECO:0007669"/>
    <property type="project" value="UniProtKB-UniRule"/>
</dbReference>
<dbReference type="GO" id="GO:0051992">
    <property type="term" value="F:UDP-N-acetylmuramoyl-L-alanyl-D-glutamyl-meso-2,6-diaminopimelyl-D-alanyl-D-alanine:undecaprenyl-phosphate transferase activity"/>
    <property type="evidence" value="ECO:0007669"/>
    <property type="project" value="RHEA"/>
</dbReference>
<dbReference type="GO" id="GO:0051301">
    <property type="term" value="P:cell division"/>
    <property type="evidence" value="ECO:0007669"/>
    <property type="project" value="UniProtKB-KW"/>
</dbReference>
<dbReference type="GO" id="GO:0071555">
    <property type="term" value="P:cell wall organization"/>
    <property type="evidence" value="ECO:0007669"/>
    <property type="project" value="UniProtKB-KW"/>
</dbReference>
<dbReference type="GO" id="GO:0009252">
    <property type="term" value="P:peptidoglycan biosynthetic process"/>
    <property type="evidence" value="ECO:0007669"/>
    <property type="project" value="UniProtKB-UniRule"/>
</dbReference>
<dbReference type="GO" id="GO:0008360">
    <property type="term" value="P:regulation of cell shape"/>
    <property type="evidence" value="ECO:0007669"/>
    <property type="project" value="UniProtKB-KW"/>
</dbReference>
<dbReference type="CDD" id="cd06852">
    <property type="entry name" value="GT_MraY"/>
    <property type="match status" value="1"/>
</dbReference>
<dbReference type="HAMAP" id="MF_00038">
    <property type="entry name" value="MraY"/>
    <property type="match status" value="1"/>
</dbReference>
<dbReference type="InterPro" id="IPR000715">
    <property type="entry name" value="Glycosyl_transferase_4"/>
</dbReference>
<dbReference type="InterPro" id="IPR003524">
    <property type="entry name" value="PNAcMuramoyl-5peptid_Trfase"/>
</dbReference>
<dbReference type="InterPro" id="IPR018480">
    <property type="entry name" value="PNAcMuramoyl-5peptid_Trfase_CS"/>
</dbReference>
<dbReference type="NCBIfam" id="TIGR00445">
    <property type="entry name" value="mraY"/>
    <property type="match status" value="1"/>
</dbReference>
<dbReference type="PANTHER" id="PTHR22926">
    <property type="entry name" value="PHOSPHO-N-ACETYLMURAMOYL-PENTAPEPTIDE-TRANSFERASE"/>
    <property type="match status" value="1"/>
</dbReference>
<dbReference type="PANTHER" id="PTHR22926:SF5">
    <property type="entry name" value="PHOSPHO-N-ACETYLMURAMOYL-PENTAPEPTIDE-TRANSFERASE HOMOLOG"/>
    <property type="match status" value="1"/>
</dbReference>
<dbReference type="Pfam" id="PF00953">
    <property type="entry name" value="Glycos_transf_4"/>
    <property type="match status" value="1"/>
</dbReference>
<dbReference type="Pfam" id="PF10555">
    <property type="entry name" value="MraY_sig1"/>
    <property type="match status" value="1"/>
</dbReference>
<dbReference type="PROSITE" id="PS01347">
    <property type="entry name" value="MRAY_1"/>
    <property type="match status" value="1"/>
</dbReference>
<dbReference type="PROSITE" id="PS01348">
    <property type="entry name" value="MRAY_2"/>
    <property type="match status" value="1"/>
</dbReference>
<protein>
    <recommendedName>
        <fullName evidence="1">Phospho-N-acetylmuramoyl-pentapeptide-transferase</fullName>
        <ecNumber evidence="1">2.7.8.13</ecNumber>
    </recommendedName>
    <alternativeName>
        <fullName evidence="1">UDP-MurNAc-pentapeptide phosphotransferase</fullName>
    </alternativeName>
</protein>